<keyword id="KW-0067">ATP-binding</keyword>
<keyword id="KW-0436">Ligase</keyword>
<keyword id="KW-0496">Mitochondrion</keyword>
<keyword id="KW-0547">Nucleotide-binding</keyword>
<keyword id="KW-0648">Protein biosynthesis</keyword>
<keyword id="KW-1185">Reference proteome</keyword>
<keyword id="KW-0809">Transit peptide</keyword>
<protein>
    <recommendedName>
        <fullName evidence="1">Glutamyl-tRNA(Gln) amidotransferase subunit B, mitochondrial</fullName>
        <shortName evidence="1">Glu-AdT subunit B</shortName>
        <ecNumber evidence="1">6.3.5.-</ecNumber>
    </recommendedName>
</protein>
<gene>
    <name type="ordered locus">Pa_5_9870</name>
    <name type="ORF">PODANS_5_9870</name>
</gene>
<name>GATB_PODAN</name>
<proteinExistence type="inferred from homology"/>
<sequence>MARLPTTELRKYLLTGQFTRRGCLHLRPSPLAPPIPPLRTLSTTPPTPSDQQPQIIPLRKQLKDQAKAAKLSGSPKKKLKKSDNQTVPGWDLTVGIEIHAQLNTPSKLFSPASTPSSSSDDAVHHHHPNTHVAPFDLAIPGSQPSFQPTTLIPAIRAALALNCHIEPISRFDRKHYFHWDQPSGYQITQYYHPFARSGSVTLYPRDGIAAEDGEQVTVGIKQLQMEQDTAKTLAQPNSTHYLDFNRVGVPLVEIITEPCIHRPATAAAFVRKVQMLLKSVDACTSGLEQGGLRADVNVSVKRTGEEELGTRTEIKNLSSFKAVEDAIIAERDRQIRVLEEGGRIEGETRGWSLGSMETRRLRGKEGEVDYRYMPDPDLGPVVIGGDLVERLGETMGMLPDEEVGVLMGRFGLSERDAMALMLMEGRLEYFYGVLEELERMLGVEAVEGGEQRHAMLAANWCLHELGKLAEAEEVGEAAAEEVTSQVPEQDLAAILFYLHQKKVTAKVAKDLLWDVFRGTIATGGVTEQIDSQDLWYKEITEADYAAIADEVIEGQEKVLQDFLKFKQGKSKAYPQGKLGFLVGKMMRAGPEQGKGMDPASAERVMRVRIEQVYLPRLEDAQ</sequence>
<organism>
    <name type="scientific">Podospora anserina (strain S / ATCC MYA-4624 / DSM 980 / FGSC 10383)</name>
    <name type="common">Pleurage anserina</name>
    <dbReference type="NCBI Taxonomy" id="515849"/>
    <lineage>
        <taxon>Eukaryota</taxon>
        <taxon>Fungi</taxon>
        <taxon>Dikarya</taxon>
        <taxon>Ascomycota</taxon>
        <taxon>Pezizomycotina</taxon>
        <taxon>Sordariomycetes</taxon>
        <taxon>Sordariomycetidae</taxon>
        <taxon>Sordariales</taxon>
        <taxon>Podosporaceae</taxon>
        <taxon>Podospora</taxon>
        <taxon>Podospora anserina</taxon>
    </lineage>
</organism>
<comment type="function">
    <text evidence="1">Allows the formation of correctly charged Gln-tRNA(Gln) through the transamidation of misacylated Glu-tRNA(Gln) in the mitochondria. The reaction takes place in the presence of glutamine and ATP through an activated gamma-phospho-Glu-tRNA(Gln).</text>
</comment>
<comment type="catalytic activity">
    <reaction evidence="1">
        <text>L-glutamyl-tRNA(Gln) + L-glutamine + ATP + H2O = L-glutaminyl-tRNA(Gln) + L-glutamate + ADP + phosphate + H(+)</text>
        <dbReference type="Rhea" id="RHEA:17521"/>
        <dbReference type="Rhea" id="RHEA-COMP:9681"/>
        <dbReference type="Rhea" id="RHEA-COMP:9684"/>
        <dbReference type="ChEBI" id="CHEBI:15377"/>
        <dbReference type="ChEBI" id="CHEBI:15378"/>
        <dbReference type="ChEBI" id="CHEBI:29985"/>
        <dbReference type="ChEBI" id="CHEBI:30616"/>
        <dbReference type="ChEBI" id="CHEBI:43474"/>
        <dbReference type="ChEBI" id="CHEBI:58359"/>
        <dbReference type="ChEBI" id="CHEBI:78520"/>
        <dbReference type="ChEBI" id="CHEBI:78521"/>
        <dbReference type="ChEBI" id="CHEBI:456216"/>
    </reaction>
</comment>
<comment type="subunit">
    <text evidence="1">Subunit of the heterotrimeric GatCAB amidotransferase (AdT) complex, composed of A, B and C subunits.</text>
</comment>
<comment type="subcellular location">
    <subcellularLocation>
        <location evidence="1">Mitochondrion</location>
    </subcellularLocation>
</comment>
<comment type="similarity">
    <text evidence="1">Belongs to the GatB/GatE family. GatB subfamily.</text>
</comment>
<comment type="sequence caution" evidence="3">
    <conflict type="erroneous initiation">
        <sequence resource="EMBL-CDS" id="CAP64720"/>
    </conflict>
    <text>Extended N-terminus.</text>
</comment>
<comment type="sequence caution" evidence="3">
    <conflict type="erroneous initiation">
        <sequence resource="EMBL-CDS" id="CDP30117"/>
    </conflict>
    <text>Extended N-terminus.</text>
</comment>
<dbReference type="EC" id="6.3.5.-" evidence="1"/>
<dbReference type="EMBL" id="CU633865">
    <property type="protein sequence ID" value="CAP64720.1"/>
    <property type="status" value="ALT_INIT"/>
    <property type="molecule type" value="Genomic_DNA"/>
</dbReference>
<dbReference type="EMBL" id="FO904940">
    <property type="protein sequence ID" value="CDP30117.1"/>
    <property type="status" value="ALT_INIT"/>
    <property type="molecule type" value="Genomic_DNA"/>
</dbReference>
<dbReference type="RefSeq" id="XP_001904813.1">
    <property type="nucleotide sequence ID" value="XM_001904778.1"/>
</dbReference>
<dbReference type="SMR" id="B2AL82"/>
<dbReference type="FunCoup" id="B2AL82">
    <property type="interactions" value="343"/>
</dbReference>
<dbReference type="STRING" id="515849.B2AL82"/>
<dbReference type="GeneID" id="6188754"/>
<dbReference type="KEGG" id="pan:PODANSg1835"/>
<dbReference type="eggNOG" id="KOG2438">
    <property type="taxonomic scope" value="Eukaryota"/>
</dbReference>
<dbReference type="HOGENOM" id="CLU_019240_4_1_1"/>
<dbReference type="InParanoid" id="B2AL82"/>
<dbReference type="OrthoDB" id="1722066at2759"/>
<dbReference type="Proteomes" id="UP000001197">
    <property type="component" value="Chromosome 5"/>
</dbReference>
<dbReference type="GO" id="GO:0030956">
    <property type="term" value="C:glutamyl-tRNA(Gln) amidotransferase complex"/>
    <property type="evidence" value="ECO:0007669"/>
    <property type="project" value="UniProtKB-UniRule"/>
</dbReference>
<dbReference type="GO" id="GO:0005739">
    <property type="term" value="C:mitochondrion"/>
    <property type="evidence" value="ECO:0007669"/>
    <property type="project" value="UniProtKB-SubCell"/>
</dbReference>
<dbReference type="GO" id="GO:0005524">
    <property type="term" value="F:ATP binding"/>
    <property type="evidence" value="ECO:0007669"/>
    <property type="project" value="UniProtKB-KW"/>
</dbReference>
<dbReference type="GO" id="GO:0050567">
    <property type="term" value="F:glutaminyl-tRNA synthase (glutamine-hydrolyzing) activity"/>
    <property type="evidence" value="ECO:0007669"/>
    <property type="project" value="UniProtKB-UniRule"/>
</dbReference>
<dbReference type="GO" id="GO:0070681">
    <property type="term" value="P:glutaminyl-tRNAGln biosynthesis via transamidation"/>
    <property type="evidence" value="ECO:0007669"/>
    <property type="project" value="UniProtKB-UniRule"/>
</dbReference>
<dbReference type="GO" id="GO:0032543">
    <property type="term" value="P:mitochondrial translation"/>
    <property type="evidence" value="ECO:0007669"/>
    <property type="project" value="UniProtKB-UniRule"/>
</dbReference>
<dbReference type="HAMAP" id="MF_00121">
    <property type="entry name" value="GatB"/>
    <property type="match status" value="1"/>
</dbReference>
<dbReference type="InterPro" id="IPR017959">
    <property type="entry name" value="Asn/Gln-tRNA_amidoTrfase_suB/E"/>
</dbReference>
<dbReference type="InterPro" id="IPR006075">
    <property type="entry name" value="Asn/Gln-tRNA_Trfase_suB/E_cat"/>
</dbReference>
<dbReference type="InterPro" id="IPR018027">
    <property type="entry name" value="Asn/Gln_amidotransferase"/>
</dbReference>
<dbReference type="InterPro" id="IPR003789">
    <property type="entry name" value="Asn/Gln_tRNA_amidoTrase-B-like"/>
</dbReference>
<dbReference type="InterPro" id="IPR004413">
    <property type="entry name" value="GatB"/>
</dbReference>
<dbReference type="InterPro" id="IPR017958">
    <property type="entry name" value="Gln-tRNA_amidoTrfase_suB_CS"/>
</dbReference>
<dbReference type="InterPro" id="IPR014746">
    <property type="entry name" value="Gln_synth/guanido_kin_cat_dom"/>
</dbReference>
<dbReference type="NCBIfam" id="TIGR00133">
    <property type="entry name" value="gatB"/>
    <property type="match status" value="1"/>
</dbReference>
<dbReference type="NCBIfam" id="NF004012">
    <property type="entry name" value="PRK05477.1-2"/>
    <property type="match status" value="1"/>
</dbReference>
<dbReference type="PANTHER" id="PTHR11659">
    <property type="entry name" value="GLUTAMYL-TRNA GLN AMIDOTRANSFERASE SUBUNIT B MITOCHONDRIAL AND PROKARYOTIC PET112-RELATED"/>
    <property type="match status" value="1"/>
</dbReference>
<dbReference type="PANTHER" id="PTHR11659:SF0">
    <property type="entry name" value="GLUTAMYL-TRNA(GLN) AMIDOTRANSFERASE SUBUNIT B, MITOCHONDRIAL"/>
    <property type="match status" value="1"/>
</dbReference>
<dbReference type="Pfam" id="PF02934">
    <property type="entry name" value="GatB_N"/>
    <property type="match status" value="1"/>
</dbReference>
<dbReference type="Pfam" id="PF02637">
    <property type="entry name" value="GatB_Yqey"/>
    <property type="match status" value="1"/>
</dbReference>
<dbReference type="SMART" id="SM00845">
    <property type="entry name" value="GatB_Yqey"/>
    <property type="match status" value="1"/>
</dbReference>
<dbReference type="SUPFAM" id="SSF89095">
    <property type="entry name" value="GatB/YqeY motif"/>
    <property type="match status" value="1"/>
</dbReference>
<dbReference type="SUPFAM" id="SSF55931">
    <property type="entry name" value="Glutamine synthetase/guanido kinase"/>
    <property type="match status" value="1"/>
</dbReference>
<dbReference type="PROSITE" id="PS01234">
    <property type="entry name" value="GATB"/>
    <property type="match status" value="1"/>
</dbReference>
<evidence type="ECO:0000255" key="1">
    <source>
        <dbReference type="HAMAP-Rule" id="MF_03147"/>
    </source>
</evidence>
<evidence type="ECO:0000256" key="2">
    <source>
        <dbReference type="SAM" id="MobiDB-lite"/>
    </source>
</evidence>
<evidence type="ECO:0000305" key="3"/>
<accession>B2AL82</accession>
<accession>A0A090CUL5</accession>
<reference key="1">
    <citation type="journal article" date="2008" name="Genome Biol.">
        <title>The genome sequence of the model ascomycete fungus Podospora anserina.</title>
        <authorList>
            <person name="Espagne E."/>
            <person name="Lespinet O."/>
            <person name="Malagnac F."/>
            <person name="Da Silva C."/>
            <person name="Jaillon O."/>
            <person name="Porcel B.M."/>
            <person name="Couloux A."/>
            <person name="Aury J.-M."/>
            <person name="Segurens B."/>
            <person name="Poulain J."/>
            <person name="Anthouard V."/>
            <person name="Grossetete S."/>
            <person name="Khalili H."/>
            <person name="Coppin E."/>
            <person name="Dequard-Chablat M."/>
            <person name="Picard M."/>
            <person name="Contamine V."/>
            <person name="Arnaise S."/>
            <person name="Bourdais A."/>
            <person name="Berteaux-Lecellier V."/>
            <person name="Gautheret D."/>
            <person name="de Vries R.P."/>
            <person name="Battaglia E."/>
            <person name="Coutinho P.M."/>
            <person name="Danchin E.G.J."/>
            <person name="Henrissat B."/>
            <person name="El Khoury R."/>
            <person name="Sainsard-Chanet A."/>
            <person name="Boivin A."/>
            <person name="Pinan-Lucarre B."/>
            <person name="Sellem C.H."/>
            <person name="Debuchy R."/>
            <person name="Wincker P."/>
            <person name="Weissenbach J."/>
            <person name="Silar P."/>
        </authorList>
    </citation>
    <scope>NUCLEOTIDE SEQUENCE [LARGE SCALE GENOMIC DNA]</scope>
    <source>
        <strain>S / ATCC MYA-4624 / DSM 980 / FGSC 10383</strain>
    </source>
</reference>
<reference key="2">
    <citation type="journal article" date="2014" name="Genetics">
        <title>Maintaining two mating types: Structure of the mating type locus and its role in heterokaryosis in Podospora anserina.</title>
        <authorList>
            <person name="Grognet P."/>
            <person name="Bidard F."/>
            <person name="Kuchly C."/>
            <person name="Tong L.C.H."/>
            <person name="Coppin E."/>
            <person name="Benkhali J.A."/>
            <person name="Couloux A."/>
            <person name="Wincker P."/>
            <person name="Debuchy R."/>
            <person name="Silar P."/>
        </authorList>
    </citation>
    <scope>GENOME REANNOTATION</scope>
    <source>
        <strain>S / ATCC MYA-4624 / DSM 980 / FGSC 10383</strain>
    </source>
</reference>
<feature type="transit peptide" description="Mitochondrion" evidence="1">
    <location>
        <begin position="1"/>
        <end position="41"/>
    </location>
</feature>
<feature type="chain" id="PRO_0000413274" description="Glutamyl-tRNA(Gln) amidotransferase subunit B, mitochondrial">
    <location>
        <begin position="42"/>
        <end position="621"/>
    </location>
</feature>
<feature type="region of interest" description="Disordered" evidence="2">
    <location>
        <begin position="26"/>
        <end position="86"/>
    </location>
</feature>
<feature type="region of interest" description="Disordered" evidence="2">
    <location>
        <begin position="106"/>
        <end position="136"/>
    </location>
</feature>
<feature type="compositionally biased region" description="Low complexity" evidence="2">
    <location>
        <begin position="38"/>
        <end position="57"/>
    </location>
</feature>
<feature type="compositionally biased region" description="Low complexity" evidence="2">
    <location>
        <begin position="110"/>
        <end position="120"/>
    </location>
</feature>